<keyword id="KW-0002">3D-structure</keyword>
<keyword id="KW-0903">Direct protein sequencing</keyword>
<keyword id="KW-0274">FAD</keyword>
<keyword id="KW-0285">Flavoprotein</keyword>
<keyword id="KW-0560">Oxidoreductase</keyword>
<keyword id="KW-0614">Plasmid</keyword>
<evidence type="ECO:0000255" key="1">
    <source>
        <dbReference type="PROSITE-ProRule" id="PRU00718"/>
    </source>
</evidence>
<evidence type="ECO:0000269" key="2">
    <source>
    </source>
</evidence>
<evidence type="ECO:0000269" key="3">
    <source>
    </source>
</evidence>
<evidence type="ECO:0000305" key="4"/>
<evidence type="ECO:0007829" key="5">
    <source>
        <dbReference type="PDB" id="1DII"/>
    </source>
</evidence>
<evidence type="ECO:0007829" key="6">
    <source>
        <dbReference type="PDB" id="1WVE"/>
    </source>
</evidence>
<evidence type="ECO:0007829" key="7">
    <source>
        <dbReference type="PDB" id="1WVF"/>
    </source>
</evidence>
<feature type="initiator methionine" description="Removed" evidence="2">
    <location>
        <position position="1"/>
    </location>
</feature>
<feature type="chain" id="PRO_0000079883" description="4-cresol dehydrogenase [hydroxylating] flavoprotein subunit">
    <location>
        <begin position="2"/>
        <end position="521"/>
    </location>
</feature>
<feature type="domain" description="FAD-binding PCMH-type" evidence="1">
    <location>
        <begin position="54"/>
        <end position="268"/>
    </location>
</feature>
<feature type="modified residue" description="O-8alpha-FAD tyrosine">
    <location>
        <position position="384"/>
    </location>
</feature>
<feature type="sequence conflict" description="In Ref. 3; AA sequence." evidence="4" ref="3">
    <original>I</original>
    <variation>K</variation>
    <location>
        <position position="47"/>
    </location>
</feature>
<feature type="sequence conflict" description="In Ref. 3; AA sequence." evidence="4" ref="3">
    <original>E</original>
    <variation>G</variation>
    <location>
        <position position="52"/>
    </location>
</feature>
<feature type="sequence conflict" description="In Ref. 3; AA sequence." evidence="4" ref="3">
    <original>HA</original>
    <variation>MG</variation>
    <location>
        <begin position="56"/>
        <end position="57"/>
    </location>
</feature>
<feature type="helix" evidence="7">
    <location>
        <begin position="15"/>
        <end position="29"/>
    </location>
</feature>
<feature type="helix" evidence="7">
    <location>
        <begin position="31"/>
        <end position="33"/>
    </location>
</feature>
<feature type="helix" evidence="7">
    <location>
        <begin position="38"/>
        <end position="45"/>
    </location>
</feature>
<feature type="strand" evidence="7">
    <location>
        <begin position="49"/>
        <end position="51"/>
    </location>
</feature>
<feature type="helix" evidence="7">
    <location>
        <begin position="53"/>
        <end position="56"/>
    </location>
</feature>
<feature type="strand" evidence="7">
    <location>
        <begin position="59"/>
        <end position="63"/>
    </location>
</feature>
<feature type="helix" evidence="7">
    <location>
        <begin position="67"/>
        <end position="80"/>
    </location>
</feature>
<feature type="strand" evidence="7">
    <location>
        <begin position="84"/>
        <end position="89"/>
    </location>
</feature>
<feature type="turn" evidence="7">
    <location>
        <begin position="93"/>
        <end position="98"/>
    </location>
</feature>
<feature type="strand" evidence="7">
    <location>
        <begin position="106"/>
        <end position="109"/>
    </location>
</feature>
<feature type="strand" evidence="7">
    <location>
        <begin position="116"/>
        <end position="120"/>
    </location>
</feature>
<feature type="turn" evidence="7">
    <location>
        <begin position="121"/>
        <end position="124"/>
    </location>
</feature>
<feature type="strand" evidence="7">
    <location>
        <begin position="125"/>
        <end position="128"/>
    </location>
</feature>
<feature type="helix" evidence="7">
    <location>
        <begin position="134"/>
        <end position="143"/>
    </location>
</feature>
<feature type="strand" evidence="7">
    <location>
        <begin position="147"/>
        <end position="149"/>
    </location>
</feature>
<feature type="helix" evidence="6">
    <location>
        <begin position="156"/>
        <end position="158"/>
    </location>
</feature>
<feature type="helix" evidence="7">
    <location>
        <begin position="161"/>
        <end position="166"/>
    </location>
</feature>
<feature type="helix" evidence="7">
    <location>
        <begin position="178"/>
        <end position="181"/>
    </location>
</feature>
<feature type="strand" evidence="7">
    <location>
        <begin position="182"/>
        <end position="188"/>
    </location>
</feature>
<feature type="strand" evidence="7">
    <location>
        <begin position="194"/>
        <end position="196"/>
    </location>
</feature>
<feature type="helix" evidence="7">
    <location>
        <begin position="198"/>
        <end position="201"/>
    </location>
</feature>
<feature type="turn" evidence="7">
    <location>
        <begin position="208"/>
        <end position="210"/>
    </location>
</feature>
<feature type="strand" evidence="6">
    <location>
        <begin position="215"/>
        <end position="217"/>
    </location>
</feature>
<feature type="helix" evidence="7">
    <location>
        <begin position="220"/>
        <end position="223"/>
    </location>
</feature>
<feature type="strand" evidence="7">
    <location>
        <begin position="226"/>
        <end position="228"/>
    </location>
</feature>
<feature type="strand" evidence="7">
    <location>
        <begin position="230"/>
        <end position="237"/>
    </location>
</feature>
<feature type="strand" evidence="7">
    <location>
        <begin position="243"/>
        <end position="252"/>
    </location>
</feature>
<feature type="helix" evidence="7">
    <location>
        <begin position="255"/>
        <end position="257"/>
    </location>
</feature>
<feature type="helix" evidence="7">
    <location>
        <begin position="258"/>
        <end position="270"/>
    </location>
</feature>
<feature type="strand" evidence="7">
    <location>
        <begin position="278"/>
        <end position="282"/>
    </location>
</feature>
<feature type="helix" evidence="7">
    <location>
        <begin position="283"/>
        <end position="289"/>
    </location>
</feature>
<feature type="helix" evidence="7">
    <location>
        <begin position="294"/>
        <end position="296"/>
    </location>
</feature>
<feature type="strand" evidence="7">
    <location>
        <begin position="301"/>
        <end position="303"/>
    </location>
</feature>
<feature type="helix" evidence="7">
    <location>
        <begin position="306"/>
        <end position="316"/>
    </location>
</feature>
<feature type="strand" evidence="7">
    <location>
        <begin position="320"/>
        <end position="330"/>
    </location>
</feature>
<feature type="helix" evidence="7">
    <location>
        <begin position="331"/>
        <end position="348"/>
    </location>
</feature>
<feature type="strand" evidence="7">
    <location>
        <begin position="352"/>
        <end position="355"/>
    </location>
</feature>
<feature type="helix" evidence="7">
    <location>
        <begin position="356"/>
        <end position="359"/>
    </location>
</feature>
<feature type="helix" evidence="7">
    <location>
        <begin position="365"/>
        <end position="372"/>
    </location>
</feature>
<feature type="helix" evidence="7">
    <location>
        <begin position="379"/>
        <end position="385"/>
    </location>
</feature>
<feature type="strand" evidence="7">
    <location>
        <begin position="390"/>
        <end position="395"/>
    </location>
</feature>
<feature type="strand" evidence="7">
    <location>
        <begin position="397"/>
        <end position="401"/>
    </location>
</feature>
<feature type="helix" evidence="7">
    <location>
        <begin position="403"/>
        <end position="419"/>
    </location>
</feature>
<feature type="strand" evidence="7">
    <location>
        <begin position="426"/>
        <end position="430"/>
    </location>
</feature>
<feature type="strand" evidence="7">
    <location>
        <begin position="432"/>
        <end position="444"/>
    </location>
</feature>
<feature type="helix" evidence="7">
    <location>
        <begin position="448"/>
        <end position="467"/>
    </location>
</feature>
<feature type="strand" evidence="5">
    <location>
        <begin position="472"/>
        <end position="474"/>
    </location>
</feature>
<feature type="helix" evidence="7">
    <location>
        <begin position="477"/>
        <end position="479"/>
    </location>
</feature>
<feature type="helix" evidence="7">
    <location>
        <begin position="480"/>
        <end position="486"/>
    </location>
</feature>
<feature type="helix" evidence="7">
    <location>
        <begin position="489"/>
        <end position="502"/>
    </location>
</feature>
<feature type="helix" evidence="7">
    <location>
        <begin position="512"/>
        <end position="514"/>
    </location>
</feature>
<name>DH4C_PSEPU</name>
<protein>
    <recommendedName>
        <fullName>4-cresol dehydrogenase [hydroxylating] flavoprotein subunit</fullName>
        <ecNumber evidence="2">1.17.9.1</ecNumber>
    </recommendedName>
    <alternativeName>
        <fullName>P-cresol methylhydroxylase</fullName>
        <shortName>PCMH</shortName>
    </alternativeName>
</protein>
<accession>P09788</accession>
<accession>Q59705</accession>
<accession>Q59706</accession>
<reference key="1">
    <citation type="journal article" date="1994" name="J. Bacteriol.">
        <title>Cloning, sequencing, and expression of the structural genes for the cytochrome and flavoprotein subunits of p-cresol methylhydroxylase from two strains of Pseudomonas putida.</title>
        <authorList>
            <person name="Kim J.-H."/>
            <person name="Fuller J.H."/>
            <person name="Cecchini G."/>
            <person name="McIntire W.S."/>
        </authorList>
    </citation>
    <scope>NUCLEOTIDE SEQUENCE [GENOMIC DNA]</scope>
    <source>
        <strain>NCIMB 9866</strain>
        <strain>NCIMB 9869</strain>
        <plasmid>pRA4000</plasmid>
        <plasmid>pRA500</plasmid>
    </source>
</reference>
<reference key="2">
    <citation type="journal article" date="1999" name="DNA Seq.">
        <title>Organization and sequences of p-hydroxybenzaldehyde dehydrogenase and other plasmid-encoded genes for early enzymes of the p-cresol degradative pathway in Pseudomonas putida NCIMB 9866 and 9869.</title>
        <authorList>
            <person name="Cronin C.N."/>
            <person name="Kim J.-H."/>
            <person name="Fuller J.H."/>
            <person name="Zhang X.-P."/>
            <person name="McIntire W.S."/>
        </authorList>
    </citation>
    <scope>NUCLEOTIDE SEQUENCE [GENOMIC DNA]</scope>
    <source>
        <strain>NCIMB 9866</strain>
        <strain>NCIMB 9869</strain>
        <plasmid>pRA4000</plasmid>
        <plasmid>pRA500</plasmid>
    </source>
</reference>
<reference key="3">
    <citation type="journal article" date="1986" name="Biochemistry">
        <title>Amino acid and sequence analysis of the cytochrome and flavoprotein subunits of p-cresol methylhydroxylase.</title>
        <authorList>
            <person name="McIntire W.S."/>
            <person name="Singer T.P."/>
            <person name="Smith A.J."/>
            <person name="Mathews F.S."/>
        </authorList>
    </citation>
    <scope>PROTEIN SEQUENCE OF 2-57</scope>
    <scope>SUBUNIT</scope>
    <scope>CHARACTERIZATION</scope>
    <source>
        <strain>NCIMB 9869</strain>
        <plasmid>pRA500</plasmid>
    </source>
</reference>
<reference key="4">
    <citation type="journal article" date="1977" name="Biochem. J.">
        <title>The purification and properties of p-cresol-(acceptor) oxidoreductase (hydroxylating), a flavocytochrome from Pseudomonas putida.</title>
        <authorList>
            <person name="Hopper D.J."/>
            <person name="Taylor D.G."/>
        </authorList>
    </citation>
    <scope>FUNCTION</scope>
    <scope>CATALYTIC ACTIVITY</scope>
</reference>
<reference key="5">
    <citation type="journal article" date="1991" name="Biochemistry">
        <title>Three-dimensional structure of p-cresol methylhydroxylase (flavocytochrome c) from Pseudomonas putida at 3.0-A resolution.</title>
        <authorList>
            <person name="Mathews F.S."/>
            <person name="Chen Z.-W."/>
            <person name="Bellamy H.D."/>
            <person name="McIntire W.S."/>
        </authorList>
    </citation>
    <scope>X-RAY CRYSTALLOGRAPHY (3.0 ANGSTROMS)</scope>
    <source>
        <strain>NCIMB 9869</strain>
        <plasmid>pRA500</plasmid>
    </source>
</reference>
<reference key="6">
    <citation type="journal article" date="2000" name="J. Mol. Biol.">
        <title>Structures of the flavocytochrome p-cresol methylhydroxylase and its enzyme-substrate complex: gated substrate entry and proton relays support the proposed catalytic mechanism.</title>
        <authorList>
            <person name="Cunane L.M."/>
            <person name="Chen Z.-W."/>
            <person name="Shamala N."/>
            <person name="Mathews F.S."/>
            <person name="Cronin C.N."/>
            <person name="McIntire W.S."/>
        </authorList>
    </citation>
    <scope>X-RAY CRYSTALLOGRAPHY (2.5 ANGSTROMS)</scope>
    <source>
        <strain>NCIMB 9869</strain>
        <plasmid>pRA500</plasmid>
    </source>
</reference>
<comment type="function">
    <text evidence="3">Catalyzes the azurin dependent hydroxylation of the methyl group of 4-methylphenol to form 4-hydroxybenzaldehyde.</text>
</comment>
<comment type="catalytic activity">
    <reaction evidence="2">
        <text>4-methylphenol + 4 oxidized [azurin] + H2O = 4 reduced [azurin] + 4-hydroxybenzaldehyde + 4 H(+)</text>
        <dbReference type="Rhea" id="RHEA:15141"/>
        <dbReference type="Rhea" id="RHEA-COMP:11034"/>
        <dbReference type="Rhea" id="RHEA-COMP:11035"/>
        <dbReference type="ChEBI" id="CHEBI:15377"/>
        <dbReference type="ChEBI" id="CHEBI:15378"/>
        <dbReference type="ChEBI" id="CHEBI:17597"/>
        <dbReference type="ChEBI" id="CHEBI:17847"/>
        <dbReference type="ChEBI" id="CHEBI:29036"/>
        <dbReference type="ChEBI" id="CHEBI:49552"/>
        <dbReference type="EC" id="1.17.9.1"/>
    </reaction>
</comment>
<comment type="cofactor">
    <cofactor>
        <name>FAD</name>
        <dbReference type="ChEBI" id="CHEBI:57692"/>
    </cofactor>
    <text>Binds 1 FAD covalently per subunit.</text>
</comment>
<comment type="pathway">
    <text>Aromatic compound metabolism; p-cresol degradation.</text>
</comment>
<comment type="subunit">
    <text evidence="2">Tetramer of two cytochrome subunits and two flavoprotein subunits.</text>
</comment>
<gene>
    <name type="primary">pchF</name>
</gene>
<sequence length="521" mass="57945">MSEQNNAVLPKGVTQGEFNKAVQKFRALLGDDNVLVESDQLVPYNKIMMPVENAAHAPSAAVTATTVEQVQGVVKICNEHKIPIWTISTGRNFGYGSAAPVQRGQVILDLKKMNKIIKIDPEMCYALVEPGVTFGQMYDYIQENNLPVMLSFSAPSAIAGPVGNTMDRGVGYTPYGEHFMMQCGMEVVLANGDVYRTGMGGVPGSNTWQIFKWGYGPTLDGMFTQANYGICTKMGFWLMPKPPVFKPFEVIFEDEADIVEIVDALRPLRMSNTIPNSVVIASTLWEAGSAHLTRAQYTTEPGHTPDSVIKQMQKDTGMGAWNLYAALYGTQEQVDVNWKIVTDVFKKLGKGRIVTQEEAGDTQPFKYRAQLMSGVPNLQEFGLYNWRGGGGSMWFAPVSEARGSECKKQAAMAKRVLHKYGLDYVAEFIVAPRDMHHVIDVLYDRTNPEETKRADACFNELLDEFEKEGYAVYRVNTRFQDRVAQSYGPVKRKLEHAIKRAVDPNNILAPGRSGIDLNNDF</sequence>
<organism>
    <name type="scientific">Pseudomonas putida</name>
    <name type="common">Arthrobacter siderocapsulatus</name>
    <dbReference type="NCBI Taxonomy" id="303"/>
    <lineage>
        <taxon>Bacteria</taxon>
        <taxon>Pseudomonadati</taxon>
        <taxon>Pseudomonadota</taxon>
        <taxon>Gammaproteobacteria</taxon>
        <taxon>Pseudomonadales</taxon>
        <taxon>Pseudomonadaceae</taxon>
        <taxon>Pseudomonas</taxon>
    </lineage>
</organism>
<geneLocation type="plasmid">
    <name>pRA4000</name>
</geneLocation>
<geneLocation type="plasmid">
    <name>pRA500</name>
</geneLocation>
<proteinExistence type="evidence at protein level"/>
<dbReference type="EC" id="1.17.9.1" evidence="2"/>
<dbReference type="EMBL" id="U96338">
    <property type="protein sequence ID" value="AAA80318.2"/>
    <property type="molecule type" value="Genomic_DNA"/>
</dbReference>
<dbReference type="EMBL" id="U96339">
    <property type="protein sequence ID" value="AAA80463.2"/>
    <property type="molecule type" value="Genomic_DNA"/>
</dbReference>
<dbReference type="PIR" id="T46687">
    <property type="entry name" value="T46687"/>
</dbReference>
<dbReference type="PDB" id="1DII">
    <property type="method" value="X-ray"/>
    <property type="resolution" value="2.50 A"/>
    <property type="chains" value="A/B=1-521"/>
</dbReference>
<dbReference type="PDB" id="1DIQ">
    <property type="method" value="X-ray"/>
    <property type="resolution" value="2.75 A"/>
    <property type="chains" value="A/B=1-521"/>
</dbReference>
<dbReference type="PDB" id="1WVE">
    <property type="method" value="X-ray"/>
    <property type="resolution" value="1.85 A"/>
    <property type="chains" value="A/B=2-521"/>
</dbReference>
<dbReference type="PDB" id="1WVF">
    <property type="method" value="X-ray"/>
    <property type="resolution" value="1.30 A"/>
    <property type="chains" value="A=2-521"/>
</dbReference>
<dbReference type="PDBsum" id="1DII"/>
<dbReference type="PDBsum" id="1DIQ"/>
<dbReference type="PDBsum" id="1WVE"/>
<dbReference type="PDBsum" id="1WVF"/>
<dbReference type="SMR" id="P09788"/>
<dbReference type="IntAct" id="P09788">
    <property type="interactions" value="1"/>
</dbReference>
<dbReference type="DrugBank" id="DB03147">
    <property type="generic name" value="Flavin adenine dinucleotide"/>
</dbReference>
<dbReference type="BioCyc" id="MetaCyc:MONOMER-19460"/>
<dbReference type="BRENDA" id="1.17.9.1">
    <property type="organism ID" value="5092"/>
</dbReference>
<dbReference type="UniPathway" id="UPA00708"/>
<dbReference type="EvolutionaryTrace" id="P09788"/>
<dbReference type="GO" id="GO:0018695">
    <property type="term" value="F:4-cresol dehydrogenase (hydroxylating) activity"/>
    <property type="evidence" value="ECO:0007669"/>
    <property type="project" value="UniProtKB-EC"/>
</dbReference>
<dbReference type="GO" id="GO:0004458">
    <property type="term" value="F:D-lactate dehydrogenase (cytochrome) activity"/>
    <property type="evidence" value="ECO:0007669"/>
    <property type="project" value="TreeGrafter"/>
</dbReference>
<dbReference type="GO" id="GO:0008720">
    <property type="term" value="F:D-lactate dehydrogenase activity"/>
    <property type="evidence" value="ECO:0007669"/>
    <property type="project" value="TreeGrafter"/>
</dbReference>
<dbReference type="GO" id="GO:0071949">
    <property type="term" value="F:FAD binding"/>
    <property type="evidence" value="ECO:0007669"/>
    <property type="project" value="InterPro"/>
</dbReference>
<dbReference type="GO" id="GO:1903457">
    <property type="term" value="P:lactate catabolic process"/>
    <property type="evidence" value="ECO:0007669"/>
    <property type="project" value="TreeGrafter"/>
</dbReference>
<dbReference type="Gene3D" id="3.30.465.10">
    <property type="match status" value="1"/>
</dbReference>
<dbReference type="Gene3D" id="3.40.462.10">
    <property type="entry name" value="FAD-linked oxidases, C-terminal domain"/>
    <property type="match status" value="1"/>
</dbReference>
<dbReference type="Gene3D" id="3.30.43.10">
    <property type="entry name" value="Uridine Diphospho-n-acetylenolpyruvylglucosamine Reductase, domain 2"/>
    <property type="match status" value="1"/>
</dbReference>
<dbReference type="Gene3D" id="1.10.45.10">
    <property type="entry name" value="Vanillyl-alcohol Oxidase, Chain A, domain 4"/>
    <property type="match status" value="1"/>
</dbReference>
<dbReference type="InterPro" id="IPR016170">
    <property type="entry name" value="Cytok_DH_C_sf"/>
</dbReference>
<dbReference type="InterPro" id="IPR004113">
    <property type="entry name" value="FAD-bd_oxidored_4_C"/>
</dbReference>
<dbReference type="InterPro" id="IPR016166">
    <property type="entry name" value="FAD-bd_PCMH"/>
</dbReference>
<dbReference type="InterPro" id="IPR036318">
    <property type="entry name" value="FAD-bd_PCMH-like_sf"/>
</dbReference>
<dbReference type="InterPro" id="IPR016167">
    <property type="entry name" value="FAD-bd_PCMH_sub1"/>
</dbReference>
<dbReference type="InterPro" id="IPR016169">
    <property type="entry name" value="FAD-bd_PCMH_sub2"/>
</dbReference>
<dbReference type="InterPro" id="IPR016164">
    <property type="entry name" value="FAD-linked_Oxase-like_C"/>
</dbReference>
<dbReference type="InterPro" id="IPR006094">
    <property type="entry name" value="Oxid_FAD_bind_N"/>
</dbReference>
<dbReference type="InterPro" id="IPR016171">
    <property type="entry name" value="Vanillyl_alc_oxidase_C-sub2"/>
</dbReference>
<dbReference type="PANTHER" id="PTHR11748:SF114">
    <property type="entry name" value="ARYL-ALCOHOL OXIDASE VANILLYL-ALCOHOL OXIDASE (AFU_ORTHOLOGUE AFUA_3G09500)-RELATED"/>
    <property type="match status" value="1"/>
</dbReference>
<dbReference type="PANTHER" id="PTHR11748">
    <property type="entry name" value="D-LACTATE DEHYDROGENASE"/>
    <property type="match status" value="1"/>
</dbReference>
<dbReference type="Pfam" id="PF02913">
    <property type="entry name" value="FAD-oxidase_C"/>
    <property type="match status" value="1"/>
</dbReference>
<dbReference type="Pfam" id="PF01565">
    <property type="entry name" value="FAD_binding_4"/>
    <property type="match status" value="1"/>
</dbReference>
<dbReference type="SUPFAM" id="SSF56176">
    <property type="entry name" value="FAD-binding/transporter-associated domain-like"/>
    <property type="match status" value="1"/>
</dbReference>
<dbReference type="SUPFAM" id="SSF55103">
    <property type="entry name" value="FAD-linked oxidases, C-terminal domain"/>
    <property type="match status" value="1"/>
</dbReference>
<dbReference type="PROSITE" id="PS51387">
    <property type="entry name" value="FAD_PCMH"/>
    <property type="match status" value="1"/>
</dbReference>